<reference key="1">
    <citation type="submission" date="2005-09" db="EMBL/GenBank/DDBJ databases">
        <title>Annotation of the Aspergillus terreus NIH2624 genome.</title>
        <authorList>
            <person name="Birren B.W."/>
            <person name="Lander E.S."/>
            <person name="Galagan J.E."/>
            <person name="Nusbaum C."/>
            <person name="Devon K."/>
            <person name="Henn M."/>
            <person name="Ma L.-J."/>
            <person name="Jaffe D.B."/>
            <person name="Butler J."/>
            <person name="Alvarez P."/>
            <person name="Gnerre S."/>
            <person name="Grabherr M."/>
            <person name="Kleber M."/>
            <person name="Mauceli E.W."/>
            <person name="Brockman W."/>
            <person name="Rounsley S."/>
            <person name="Young S.K."/>
            <person name="LaButti K."/>
            <person name="Pushparaj V."/>
            <person name="DeCaprio D."/>
            <person name="Crawford M."/>
            <person name="Koehrsen M."/>
            <person name="Engels R."/>
            <person name="Montgomery P."/>
            <person name="Pearson M."/>
            <person name="Howarth C."/>
            <person name="Larson L."/>
            <person name="Luoma S."/>
            <person name="White J."/>
            <person name="Alvarado L."/>
            <person name="Kodira C.D."/>
            <person name="Zeng Q."/>
            <person name="Oleary S."/>
            <person name="Yandava C."/>
            <person name="Denning D.W."/>
            <person name="Nierman W.C."/>
            <person name="Milne T."/>
            <person name="Madden K."/>
        </authorList>
    </citation>
    <scope>NUCLEOTIDE SEQUENCE [LARGE SCALE GENOMIC DNA]</scope>
    <source>
        <strain>NIH 2624 / FGSC A1156</strain>
    </source>
</reference>
<name>BSD_ASPTN</name>
<sequence length="130" mass="13455">MPLSQEESTLIERATATINSIPISEDYSVASAALSSDGRIFTGVNVYHFTGGPCAELVVLGTAAAAAAGNLTCIVAIGNENRGILSPCGRCRQVLLDLHPGIKAVVKDSDGQPTAVGIRELLPSGYMNRA</sequence>
<evidence type="ECO:0000250" key="1"/>
<evidence type="ECO:0000255" key="2">
    <source>
        <dbReference type="PROSITE-ProRule" id="PRU01083"/>
    </source>
</evidence>
<evidence type="ECO:0000305" key="3"/>
<comment type="function">
    <text evidence="1">Catalyzes the deamination of the cytosine moiety of the antibiotics blasticidin S, cytomycin and acetylblasticidin S.</text>
</comment>
<comment type="catalytic activity">
    <reaction>
        <text>blasticidin S + H2O + H(+) = deaminohydroxyblasticidin S + NH4(+)</text>
        <dbReference type="Rhea" id="RHEA:10148"/>
        <dbReference type="ChEBI" id="CHEBI:15377"/>
        <dbReference type="ChEBI" id="CHEBI:15378"/>
        <dbReference type="ChEBI" id="CHEBI:28938"/>
        <dbReference type="ChEBI" id="CHEBI:57289"/>
        <dbReference type="ChEBI" id="CHEBI:57697"/>
        <dbReference type="EC" id="3.5.4.23"/>
    </reaction>
</comment>
<comment type="cofactor">
    <cofactor evidence="1">
        <name>Zn(2+)</name>
        <dbReference type="ChEBI" id="CHEBI:29105"/>
    </cofactor>
</comment>
<comment type="subunit">
    <text evidence="1">Homotetramer.</text>
</comment>
<comment type="similarity">
    <text evidence="3">Belongs to the cytidine and deoxycytidylate deaminase family.</text>
</comment>
<protein>
    <recommendedName>
        <fullName>Blasticidin-S deaminase</fullName>
        <ecNumber>3.5.4.23</ecNumber>
    </recommendedName>
</protein>
<feature type="chain" id="PRO_0000283714" description="Blasticidin-S deaminase">
    <location>
        <begin position="1"/>
        <end position="130"/>
    </location>
</feature>
<feature type="domain" description="CMP/dCMP-type deaminase" evidence="2">
    <location>
        <begin position="1"/>
        <end position="129"/>
    </location>
</feature>
<feature type="active site" description="Proton donor" evidence="1">
    <location>
        <position position="56"/>
    </location>
</feature>
<feature type="binding site" description="in other chain" evidence="1">
    <location>
        <position position="28"/>
    </location>
    <ligand>
        <name>substrate</name>
        <note>ligand shared between two homotetrameric partners</note>
    </ligand>
</feature>
<feature type="binding site" evidence="1">
    <location>
        <position position="54"/>
    </location>
    <ligand>
        <name>Zn(2+)</name>
        <dbReference type="ChEBI" id="CHEBI:29105"/>
        <note>catalytic</note>
    </ligand>
</feature>
<feature type="binding site" description="in other chain" evidence="1">
    <location>
        <position position="82"/>
    </location>
    <ligand>
        <name>substrate</name>
        <note>ligand shared between two homotetrameric partners</note>
    </ligand>
</feature>
<feature type="binding site" evidence="1">
    <location>
        <position position="88"/>
    </location>
    <ligand>
        <name>Zn(2+)</name>
        <dbReference type="ChEBI" id="CHEBI:29105"/>
        <note>catalytic</note>
    </ligand>
</feature>
<feature type="binding site" evidence="1">
    <location>
        <position position="91"/>
    </location>
    <ligand>
        <name>Zn(2+)</name>
        <dbReference type="ChEBI" id="CHEBI:29105"/>
        <note>catalytic</note>
    </ligand>
</feature>
<feature type="binding site" evidence="1">
    <location>
        <position position="126"/>
    </location>
    <ligand>
        <name>substrate</name>
        <note>ligand shared between two homotetrameric partners</note>
    </ligand>
</feature>
<gene>
    <name type="primary">bsd</name>
    <name type="ORF">ATEG_07113</name>
</gene>
<dbReference type="EC" id="3.5.4.23"/>
<dbReference type="EMBL" id="CH476603">
    <property type="protein sequence ID" value="EAU32497.1"/>
    <property type="molecule type" value="Genomic_DNA"/>
</dbReference>
<dbReference type="RefSeq" id="XP_001209799.1">
    <property type="nucleotide sequence ID" value="XM_001209799.1"/>
</dbReference>
<dbReference type="SMR" id="P0C2P1"/>
<dbReference type="STRING" id="341663.P0C2P1"/>
<dbReference type="EnsemblFungi" id="EAU32497">
    <property type="protein sequence ID" value="EAU32497"/>
    <property type="gene ID" value="ATEG_07113"/>
</dbReference>
<dbReference type="GeneID" id="4318849"/>
<dbReference type="VEuPathDB" id="FungiDB:ATEG_07113"/>
<dbReference type="eggNOG" id="ENOG502ST2E">
    <property type="taxonomic scope" value="Eukaryota"/>
</dbReference>
<dbReference type="HOGENOM" id="CLU_097262_4_1_1"/>
<dbReference type="OMA" id="RYRNDWQ"/>
<dbReference type="OrthoDB" id="414540at2759"/>
<dbReference type="Proteomes" id="UP000007963">
    <property type="component" value="Unassembled WGS sequence"/>
</dbReference>
<dbReference type="GO" id="GO:0005829">
    <property type="term" value="C:cytosol"/>
    <property type="evidence" value="ECO:0007669"/>
    <property type="project" value="TreeGrafter"/>
</dbReference>
<dbReference type="GO" id="GO:0047711">
    <property type="term" value="F:blasticidin-S deaminase activity"/>
    <property type="evidence" value="ECO:0007669"/>
    <property type="project" value="UniProtKB-EC"/>
</dbReference>
<dbReference type="GO" id="GO:0004126">
    <property type="term" value="F:cytidine deaminase activity"/>
    <property type="evidence" value="ECO:0007669"/>
    <property type="project" value="TreeGrafter"/>
</dbReference>
<dbReference type="GO" id="GO:0042802">
    <property type="term" value="F:identical protein binding"/>
    <property type="evidence" value="ECO:0007669"/>
    <property type="project" value="UniProtKB-ARBA"/>
</dbReference>
<dbReference type="GO" id="GO:0008270">
    <property type="term" value="F:zinc ion binding"/>
    <property type="evidence" value="ECO:0007669"/>
    <property type="project" value="InterPro"/>
</dbReference>
<dbReference type="GO" id="GO:0009972">
    <property type="term" value="P:cytidine deamination"/>
    <property type="evidence" value="ECO:0007669"/>
    <property type="project" value="TreeGrafter"/>
</dbReference>
<dbReference type="GO" id="GO:0046677">
    <property type="term" value="P:response to antibiotic"/>
    <property type="evidence" value="ECO:0007669"/>
    <property type="project" value="UniProtKB-KW"/>
</dbReference>
<dbReference type="CDD" id="cd01283">
    <property type="entry name" value="cytidine_deaminase"/>
    <property type="match status" value="1"/>
</dbReference>
<dbReference type="Gene3D" id="3.40.140.10">
    <property type="entry name" value="Cytidine Deaminase, domain 2"/>
    <property type="match status" value="1"/>
</dbReference>
<dbReference type="InterPro" id="IPR016192">
    <property type="entry name" value="APOBEC/CMP_deaminase_Zn-bd"/>
</dbReference>
<dbReference type="InterPro" id="IPR002125">
    <property type="entry name" value="CMP_dCMP_dom"/>
</dbReference>
<dbReference type="InterPro" id="IPR050202">
    <property type="entry name" value="Cyt/Deoxycyt_deaminase"/>
</dbReference>
<dbReference type="InterPro" id="IPR016193">
    <property type="entry name" value="Cytidine_deaminase-like"/>
</dbReference>
<dbReference type="PANTHER" id="PTHR11644">
    <property type="entry name" value="CYTIDINE DEAMINASE"/>
    <property type="match status" value="1"/>
</dbReference>
<dbReference type="PANTHER" id="PTHR11644:SF2">
    <property type="entry name" value="CYTIDINE DEAMINASE"/>
    <property type="match status" value="1"/>
</dbReference>
<dbReference type="Pfam" id="PF00383">
    <property type="entry name" value="dCMP_cyt_deam_1"/>
    <property type="match status" value="1"/>
</dbReference>
<dbReference type="SUPFAM" id="SSF53927">
    <property type="entry name" value="Cytidine deaminase-like"/>
    <property type="match status" value="1"/>
</dbReference>
<dbReference type="PROSITE" id="PS00903">
    <property type="entry name" value="CYT_DCMP_DEAMINASES_1"/>
    <property type="match status" value="1"/>
</dbReference>
<dbReference type="PROSITE" id="PS51747">
    <property type="entry name" value="CYT_DCMP_DEAMINASES_2"/>
    <property type="match status" value="1"/>
</dbReference>
<accession>P0C2P1</accession>
<accession>P78986</accession>
<accession>Q0CGS9</accession>
<keyword id="KW-0046">Antibiotic resistance</keyword>
<keyword id="KW-0378">Hydrolase</keyword>
<keyword id="KW-0479">Metal-binding</keyword>
<keyword id="KW-1185">Reference proteome</keyword>
<keyword id="KW-0862">Zinc</keyword>
<proteinExistence type="inferred from homology"/>
<organism>
    <name type="scientific">Aspergillus terreus (strain NIH 2624 / FGSC A1156)</name>
    <dbReference type="NCBI Taxonomy" id="341663"/>
    <lineage>
        <taxon>Eukaryota</taxon>
        <taxon>Fungi</taxon>
        <taxon>Dikarya</taxon>
        <taxon>Ascomycota</taxon>
        <taxon>Pezizomycotina</taxon>
        <taxon>Eurotiomycetes</taxon>
        <taxon>Eurotiomycetidae</taxon>
        <taxon>Eurotiales</taxon>
        <taxon>Aspergillaceae</taxon>
        <taxon>Aspergillus</taxon>
        <taxon>Aspergillus subgen. Circumdati</taxon>
    </lineage>
</organism>